<comment type="function">
    <text evidence="1">Involved in peptide bond synthesis. Stimulates efficient translation and peptide-bond synthesis on native or reconstituted 70S ribosomes in vitro. Probably functions indirectly by altering the affinity of the ribosome for aminoacyl-tRNA, thus increasing their reactivity as acceptors for peptidyl transferase.</text>
</comment>
<comment type="pathway">
    <text evidence="1">Protein biosynthesis; polypeptide chain elongation.</text>
</comment>
<comment type="subcellular location">
    <subcellularLocation>
        <location evidence="1">Cytoplasm</location>
    </subcellularLocation>
</comment>
<comment type="similarity">
    <text evidence="1">Belongs to the elongation factor P family.</text>
</comment>
<comment type="sequence caution" evidence="2">
    <conflict type="erroneous initiation">
        <sequence resource="EMBL-CDS" id="AAN51853"/>
    </conflict>
</comment>
<keyword id="KW-0963">Cytoplasm</keyword>
<keyword id="KW-0251">Elongation factor</keyword>
<keyword id="KW-0648">Protein biosynthesis</keyword>
<keyword id="KW-1185">Reference proteome</keyword>
<feature type="chain" id="PRO_0000094274" description="Elongation factor P">
    <location>
        <begin position="1"/>
        <end position="188"/>
    </location>
</feature>
<dbReference type="EMBL" id="AE010301">
    <property type="protein sequence ID" value="AAN51853.1"/>
    <property type="status" value="ALT_INIT"/>
    <property type="molecule type" value="Genomic_DNA"/>
</dbReference>
<dbReference type="RefSeq" id="NP_714838.1">
    <property type="nucleotide sequence ID" value="NC_004343.2"/>
</dbReference>
<dbReference type="RefSeq" id="WP_000172195.1">
    <property type="nucleotide sequence ID" value="NC_004343.2"/>
</dbReference>
<dbReference type="SMR" id="Q8EXB9"/>
<dbReference type="FunCoup" id="Q8EXB9">
    <property type="interactions" value="485"/>
</dbReference>
<dbReference type="STRING" id="189518.LB_294"/>
<dbReference type="PaxDb" id="189518-LB_294"/>
<dbReference type="EnsemblBacteria" id="AAN51853">
    <property type="protein sequence ID" value="AAN51853"/>
    <property type="gene ID" value="LB_294"/>
</dbReference>
<dbReference type="GeneID" id="61141426"/>
<dbReference type="KEGG" id="lil:LB_294"/>
<dbReference type="PATRIC" id="fig|189518.3.peg.4617"/>
<dbReference type="HOGENOM" id="CLU_074944_0_2_12"/>
<dbReference type="InParanoid" id="Q8EXB9"/>
<dbReference type="OrthoDB" id="9801844at2"/>
<dbReference type="UniPathway" id="UPA00345"/>
<dbReference type="Proteomes" id="UP000001408">
    <property type="component" value="Chromosome II"/>
</dbReference>
<dbReference type="GO" id="GO:0005737">
    <property type="term" value="C:cytoplasm"/>
    <property type="evidence" value="ECO:0000318"/>
    <property type="project" value="GO_Central"/>
</dbReference>
<dbReference type="GO" id="GO:0003746">
    <property type="term" value="F:translation elongation factor activity"/>
    <property type="evidence" value="ECO:0000318"/>
    <property type="project" value="GO_Central"/>
</dbReference>
<dbReference type="GO" id="GO:0043043">
    <property type="term" value="P:peptide biosynthetic process"/>
    <property type="evidence" value="ECO:0007669"/>
    <property type="project" value="InterPro"/>
</dbReference>
<dbReference type="CDD" id="cd04470">
    <property type="entry name" value="S1_EF-P_repeat_1"/>
    <property type="match status" value="1"/>
</dbReference>
<dbReference type="CDD" id="cd05794">
    <property type="entry name" value="S1_EF-P_repeat_2"/>
    <property type="match status" value="1"/>
</dbReference>
<dbReference type="FunFam" id="2.30.30.30:FF:000003">
    <property type="entry name" value="Elongation factor P"/>
    <property type="match status" value="1"/>
</dbReference>
<dbReference type="FunFam" id="2.40.50.140:FF:000004">
    <property type="entry name" value="Elongation factor P"/>
    <property type="match status" value="1"/>
</dbReference>
<dbReference type="FunFam" id="2.40.50.140:FF:000009">
    <property type="entry name" value="Elongation factor P"/>
    <property type="match status" value="1"/>
</dbReference>
<dbReference type="Gene3D" id="2.30.30.30">
    <property type="match status" value="1"/>
</dbReference>
<dbReference type="Gene3D" id="2.40.50.140">
    <property type="entry name" value="Nucleic acid-binding proteins"/>
    <property type="match status" value="2"/>
</dbReference>
<dbReference type="HAMAP" id="MF_00141">
    <property type="entry name" value="EF_P"/>
    <property type="match status" value="1"/>
</dbReference>
<dbReference type="InterPro" id="IPR015365">
    <property type="entry name" value="Elong-fact-P_C"/>
</dbReference>
<dbReference type="InterPro" id="IPR012340">
    <property type="entry name" value="NA-bd_OB-fold"/>
</dbReference>
<dbReference type="InterPro" id="IPR014722">
    <property type="entry name" value="Rib_uL2_dom2"/>
</dbReference>
<dbReference type="InterPro" id="IPR020599">
    <property type="entry name" value="Transl_elong_fac_P/YeiP"/>
</dbReference>
<dbReference type="InterPro" id="IPR013185">
    <property type="entry name" value="Transl_elong_KOW-like"/>
</dbReference>
<dbReference type="InterPro" id="IPR001059">
    <property type="entry name" value="Transl_elong_P/YeiP_cen"/>
</dbReference>
<dbReference type="InterPro" id="IPR011768">
    <property type="entry name" value="Transl_elongation_fac_P"/>
</dbReference>
<dbReference type="InterPro" id="IPR008991">
    <property type="entry name" value="Translation_prot_SH3-like_sf"/>
</dbReference>
<dbReference type="NCBIfam" id="TIGR00038">
    <property type="entry name" value="efp"/>
    <property type="match status" value="1"/>
</dbReference>
<dbReference type="NCBIfam" id="NF001810">
    <property type="entry name" value="PRK00529.1"/>
    <property type="match status" value="1"/>
</dbReference>
<dbReference type="PANTHER" id="PTHR30053">
    <property type="entry name" value="ELONGATION FACTOR P"/>
    <property type="match status" value="1"/>
</dbReference>
<dbReference type="PANTHER" id="PTHR30053:SF12">
    <property type="entry name" value="ELONGATION FACTOR P (EF-P) FAMILY PROTEIN"/>
    <property type="match status" value="1"/>
</dbReference>
<dbReference type="Pfam" id="PF01132">
    <property type="entry name" value="EFP"/>
    <property type="match status" value="1"/>
</dbReference>
<dbReference type="Pfam" id="PF08207">
    <property type="entry name" value="EFP_N"/>
    <property type="match status" value="1"/>
</dbReference>
<dbReference type="Pfam" id="PF09285">
    <property type="entry name" value="Elong-fact-P_C"/>
    <property type="match status" value="1"/>
</dbReference>
<dbReference type="PIRSF" id="PIRSF005901">
    <property type="entry name" value="EF-P"/>
    <property type="match status" value="1"/>
</dbReference>
<dbReference type="SMART" id="SM01185">
    <property type="entry name" value="EFP"/>
    <property type="match status" value="1"/>
</dbReference>
<dbReference type="SMART" id="SM00841">
    <property type="entry name" value="Elong-fact-P_C"/>
    <property type="match status" value="1"/>
</dbReference>
<dbReference type="SUPFAM" id="SSF50249">
    <property type="entry name" value="Nucleic acid-binding proteins"/>
    <property type="match status" value="2"/>
</dbReference>
<dbReference type="SUPFAM" id="SSF50104">
    <property type="entry name" value="Translation proteins SH3-like domain"/>
    <property type="match status" value="1"/>
</dbReference>
<proteinExistence type="inferred from homology"/>
<reference key="1">
    <citation type="journal article" date="2003" name="Nature">
        <title>Unique physiological and pathogenic features of Leptospira interrogans revealed by whole-genome sequencing.</title>
        <authorList>
            <person name="Ren S.-X."/>
            <person name="Fu G."/>
            <person name="Jiang X.-G."/>
            <person name="Zeng R."/>
            <person name="Miao Y.-G."/>
            <person name="Xu H."/>
            <person name="Zhang Y.-X."/>
            <person name="Xiong H."/>
            <person name="Lu G."/>
            <person name="Lu L.-F."/>
            <person name="Jiang H.-Q."/>
            <person name="Jia J."/>
            <person name="Tu Y.-F."/>
            <person name="Jiang J.-X."/>
            <person name="Gu W.-Y."/>
            <person name="Zhang Y.-Q."/>
            <person name="Cai Z."/>
            <person name="Sheng H.-H."/>
            <person name="Yin H.-F."/>
            <person name="Zhang Y."/>
            <person name="Zhu G.-F."/>
            <person name="Wan M."/>
            <person name="Huang H.-L."/>
            <person name="Qian Z."/>
            <person name="Wang S.-Y."/>
            <person name="Ma W."/>
            <person name="Yao Z.-J."/>
            <person name="Shen Y."/>
            <person name="Qiang B.-Q."/>
            <person name="Xia Q.-C."/>
            <person name="Guo X.-K."/>
            <person name="Danchin A."/>
            <person name="Saint Girons I."/>
            <person name="Somerville R.L."/>
            <person name="Wen Y.-M."/>
            <person name="Shi M.-H."/>
            <person name="Chen Z."/>
            <person name="Xu J.-G."/>
            <person name="Zhao G.-P."/>
        </authorList>
    </citation>
    <scope>NUCLEOTIDE SEQUENCE [LARGE SCALE GENOMIC DNA]</scope>
    <source>
        <strain>56601</strain>
    </source>
</reference>
<name>EFP_LEPIN</name>
<organism>
    <name type="scientific">Leptospira interrogans serogroup Icterohaemorrhagiae serovar Lai (strain 56601)</name>
    <dbReference type="NCBI Taxonomy" id="189518"/>
    <lineage>
        <taxon>Bacteria</taxon>
        <taxon>Pseudomonadati</taxon>
        <taxon>Spirochaetota</taxon>
        <taxon>Spirochaetia</taxon>
        <taxon>Leptospirales</taxon>
        <taxon>Leptospiraceae</taxon>
        <taxon>Leptospira</taxon>
    </lineage>
</organism>
<protein>
    <recommendedName>
        <fullName evidence="1">Elongation factor P</fullName>
        <shortName evidence="1">EF-P</shortName>
    </recommendedName>
</protein>
<sequence>MTLGITEVKKGMVLKVEGDLYSVVKTEFVNPGKGSAFIRTKLKNLTRNSSIERTFKAAEKLESVELEKRNMTICYTEGDDIIFMDSNDFEQMPVSKEYVEDILPFLKEETPMEVTFYEGKPIGVIPPNFSILEVTYAEEGLKGDTSGTAQKRITVETGGEINVPIFVKQGDVIKIDLRDLTYVERVSK</sequence>
<evidence type="ECO:0000255" key="1">
    <source>
        <dbReference type="HAMAP-Rule" id="MF_00141"/>
    </source>
</evidence>
<evidence type="ECO:0000305" key="2"/>
<gene>
    <name evidence="1" type="primary">efp</name>
    <name type="ordered locus">LB_294</name>
</gene>
<accession>Q8EXB9</accession>